<organism>
    <name type="scientific">Escherichia coli (strain SMS-3-5 / SECEC)</name>
    <dbReference type="NCBI Taxonomy" id="439855"/>
    <lineage>
        <taxon>Bacteria</taxon>
        <taxon>Pseudomonadati</taxon>
        <taxon>Pseudomonadota</taxon>
        <taxon>Gammaproteobacteria</taxon>
        <taxon>Enterobacterales</taxon>
        <taxon>Enterobacteriaceae</taxon>
        <taxon>Escherichia</taxon>
    </lineage>
</organism>
<accession>B1LQF8</accession>
<dbReference type="EMBL" id="CP000970">
    <property type="protein sequence ID" value="ACB19112.1"/>
    <property type="molecule type" value="Genomic_DNA"/>
</dbReference>
<dbReference type="RefSeq" id="WP_000883400.1">
    <property type="nucleotide sequence ID" value="NC_010498.1"/>
</dbReference>
<dbReference type="BMRB" id="B1LQF8"/>
<dbReference type="SMR" id="B1LQF8"/>
<dbReference type="GeneID" id="93777687"/>
<dbReference type="KEGG" id="ecm:EcSMS35_4606"/>
<dbReference type="HOGENOM" id="CLU_098807_3_0_6"/>
<dbReference type="Proteomes" id="UP000007011">
    <property type="component" value="Chromosome"/>
</dbReference>
<dbReference type="GO" id="GO:0005737">
    <property type="term" value="C:cytoplasm"/>
    <property type="evidence" value="ECO:0007669"/>
    <property type="project" value="UniProtKB-SubCell"/>
</dbReference>
<dbReference type="GO" id="GO:0005507">
    <property type="term" value="F:copper ion binding"/>
    <property type="evidence" value="ECO:0007669"/>
    <property type="project" value="UniProtKB-UniRule"/>
</dbReference>
<dbReference type="GO" id="GO:0010038">
    <property type="term" value="P:response to metal ion"/>
    <property type="evidence" value="ECO:0007669"/>
    <property type="project" value="InterPro"/>
</dbReference>
<dbReference type="FunFam" id="3.30.70.120:FF:000004">
    <property type="entry name" value="Divalent-cation tolerance protein CutA"/>
    <property type="match status" value="1"/>
</dbReference>
<dbReference type="Gene3D" id="3.30.70.120">
    <property type="match status" value="1"/>
</dbReference>
<dbReference type="HAMAP" id="MF_01160">
    <property type="entry name" value="CutA"/>
    <property type="match status" value="1"/>
</dbReference>
<dbReference type="InterPro" id="IPR023700">
    <property type="entry name" value="CutA_Enterobact"/>
</dbReference>
<dbReference type="InterPro" id="IPR004323">
    <property type="entry name" value="Ion_tolerance_CutA"/>
</dbReference>
<dbReference type="InterPro" id="IPR011322">
    <property type="entry name" value="N-reg_PII-like_a/b"/>
</dbReference>
<dbReference type="InterPro" id="IPR015867">
    <property type="entry name" value="N-reg_PII/ATP_PRibTrfase_C"/>
</dbReference>
<dbReference type="NCBIfam" id="NF007930">
    <property type="entry name" value="PRK10645.1"/>
    <property type="match status" value="1"/>
</dbReference>
<dbReference type="PANTHER" id="PTHR23419">
    <property type="entry name" value="DIVALENT CATION TOLERANCE CUTA-RELATED"/>
    <property type="match status" value="1"/>
</dbReference>
<dbReference type="PANTHER" id="PTHR23419:SF8">
    <property type="entry name" value="FI09726P"/>
    <property type="match status" value="1"/>
</dbReference>
<dbReference type="Pfam" id="PF03091">
    <property type="entry name" value="CutA1"/>
    <property type="match status" value="1"/>
</dbReference>
<dbReference type="SUPFAM" id="SSF54913">
    <property type="entry name" value="GlnB-like"/>
    <property type="match status" value="1"/>
</dbReference>
<feature type="chain" id="PRO_1000137846" description="Divalent-cation tolerance protein CutA">
    <location>
        <begin position="1"/>
        <end position="112"/>
    </location>
</feature>
<feature type="binding site" evidence="1">
    <location>
        <position position="16"/>
    </location>
    <ligand>
        <name>Cu cation</name>
        <dbReference type="ChEBI" id="CHEBI:23378"/>
    </ligand>
</feature>
<feature type="binding site" evidence="1">
    <location>
        <position position="83"/>
    </location>
    <ligand>
        <name>Cu cation</name>
        <dbReference type="ChEBI" id="CHEBI:23378"/>
    </ligand>
</feature>
<feature type="binding site" evidence="1">
    <location>
        <position position="84"/>
    </location>
    <ligand>
        <name>Cu cation</name>
        <dbReference type="ChEBI" id="CHEBI:23378"/>
    </ligand>
</feature>
<protein>
    <recommendedName>
        <fullName evidence="1">Divalent-cation tolerance protein CutA</fullName>
    </recommendedName>
</protein>
<evidence type="ECO:0000255" key="1">
    <source>
        <dbReference type="HAMAP-Rule" id="MF_01160"/>
    </source>
</evidence>
<keyword id="KW-0186">Copper</keyword>
<keyword id="KW-0963">Cytoplasm</keyword>
<keyword id="KW-0479">Metal-binding</keyword>
<name>CUTA_ECOSM</name>
<comment type="function">
    <text evidence="1">Involved in resistance toward heavy metals.</text>
</comment>
<comment type="cofactor">
    <cofactor evidence="1">
        <name>Cu cation</name>
        <dbReference type="ChEBI" id="CHEBI:23378"/>
    </cofactor>
    <text evidence="1">Binds 1 copper ion per subunit.</text>
</comment>
<comment type="subunit">
    <text evidence="1">Homotrimer.</text>
</comment>
<comment type="subcellular location">
    <subcellularLocation>
        <location evidence="1">Cytoplasm</location>
    </subcellularLocation>
</comment>
<comment type="similarity">
    <text evidence="1">Belongs to the CutA family.</text>
</comment>
<reference key="1">
    <citation type="journal article" date="2008" name="J. Bacteriol.">
        <title>Insights into the environmental resistance gene pool from the genome sequence of the multidrug-resistant environmental isolate Escherichia coli SMS-3-5.</title>
        <authorList>
            <person name="Fricke W.F."/>
            <person name="Wright M.S."/>
            <person name="Lindell A.H."/>
            <person name="Harkins D.M."/>
            <person name="Baker-Austin C."/>
            <person name="Ravel J."/>
            <person name="Stepanauskas R."/>
        </authorList>
    </citation>
    <scope>NUCLEOTIDE SEQUENCE [LARGE SCALE GENOMIC DNA]</scope>
    <source>
        <strain>SMS-3-5 / SECEC</strain>
    </source>
</reference>
<proteinExistence type="inferred from homology"/>
<sequence length="112" mass="12331">MLDEKSSNTASVVVLCTAPDEATAQDLAAKVLAEKLAACATLIPGATSLYYWEGKLEQEYEVQMILKTTVSHQQALLECLKSHHPYQTPELLVLPVTHGDTDYLSWLNASLR</sequence>
<gene>
    <name evidence="1" type="primary">cutA</name>
    <name type="ordered locus">EcSMS35_4606</name>
</gene>